<sequence>MMKKIFFIFALSGILAACTVGGGVSAGGGSNGVGLGVGIGSGIRF</sequence>
<name>Y1327_HAEIN</name>
<dbReference type="EMBL" id="L42023">
    <property type="protein sequence ID" value="AAC22981.1"/>
    <property type="molecule type" value="Genomic_DNA"/>
</dbReference>
<dbReference type="PIR" id="A64026">
    <property type="entry name" value="A64026"/>
</dbReference>
<dbReference type="RefSeq" id="NP_439478.1">
    <property type="nucleotide sequence ID" value="NC_000907.1"/>
</dbReference>
<dbReference type="STRING" id="71421.HI_1327"/>
<dbReference type="EnsemblBacteria" id="AAC22981">
    <property type="protein sequence ID" value="AAC22981"/>
    <property type="gene ID" value="HI_1327"/>
</dbReference>
<dbReference type="KEGG" id="hin:HI_1327"/>
<dbReference type="PATRIC" id="fig|71421.8.peg.1379"/>
<dbReference type="HOGENOM" id="CLU_210711_1_0_6"/>
<dbReference type="BioCyc" id="HINF71421:G1GJ1-1352-MONOMER"/>
<dbReference type="Proteomes" id="UP000000579">
    <property type="component" value="Chromosome"/>
</dbReference>
<dbReference type="GO" id="GO:0016020">
    <property type="term" value="C:membrane"/>
    <property type="evidence" value="ECO:0007669"/>
    <property type="project" value="UniProtKB-SubCell"/>
</dbReference>
<dbReference type="PROSITE" id="PS51257">
    <property type="entry name" value="PROKAR_LIPOPROTEIN"/>
    <property type="match status" value="1"/>
</dbReference>
<protein>
    <recommendedName>
        <fullName>Uncharacterized protein HI_1327</fullName>
    </recommendedName>
</protein>
<accession>P44163</accession>
<organism>
    <name type="scientific">Haemophilus influenzae (strain ATCC 51907 / DSM 11121 / KW20 / Rd)</name>
    <dbReference type="NCBI Taxonomy" id="71421"/>
    <lineage>
        <taxon>Bacteria</taxon>
        <taxon>Pseudomonadati</taxon>
        <taxon>Pseudomonadota</taxon>
        <taxon>Gammaproteobacteria</taxon>
        <taxon>Pasteurellales</taxon>
        <taxon>Pasteurellaceae</taxon>
        <taxon>Haemophilus</taxon>
    </lineage>
</organism>
<keyword id="KW-0472">Membrane</keyword>
<keyword id="KW-1185">Reference proteome</keyword>
<keyword id="KW-0812">Transmembrane</keyword>
<keyword id="KW-1133">Transmembrane helix</keyword>
<comment type="subcellular location">
    <subcellularLocation>
        <location evidence="2">Membrane</location>
        <topology evidence="2">Single-pass membrane protein</topology>
    </subcellularLocation>
</comment>
<gene>
    <name type="ordered locus">HI_1327</name>
</gene>
<evidence type="ECO:0000255" key="1"/>
<evidence type="ECO:0000305" key="2"/>
<reference key="1">
    <citation type="journal article" date="1995" name="Science">
        <title>Whole-genome random sequencing and assembly of Haemophilus influenzae Rd.</title>
        <authorList>
            <person name="Fleischmann R.D."/>
            <person name="Adams M.D."/>
            <person name="White O."/>
            <person name="Clayton R.A."/>
            <person name="Kirkness E.F."/>
            <person name="Kerlavage A.R."/>
            <person name="Bult C.J."/>
            <person name="Tomb J.-F."/>
            <person name="Dougherty B.A."/>
            <person name="Merrick J.M."/>
            <person name="McKenney K."/>
            <person name="Sutton G.G."/>
            <person name="FitzHugh W."/>
            <person name="Fields C.A."/>
            <person name="Gocayne J.D."/>
            <person name="Scott J.D."/>
            <person name="Shirley R."/>
            <person name="Liu L.-I."/>
            <person name="Glodek A."/>
            <person name="Kelley J.M."/>
            <person name="Weidman J.F."/>
            <person name="Phillips C.A."/>
            <person name="Spriggs T."/>
            <person name="Hedblom E."/>
            <person name="Cotton M.D."/>
            <person name="Utterback T.R."/>
            <person name="Hanna M.C."/>
            <person name="Nguyen D.T."/>
            <person name="Saudek D.M."/>
            <person name="Brandon R.C."/>
            <person name="Fine L.D."/>
            <person name="Fritchman J.L."/>
            <person name="Fuhrmann J.L."/>
            <person name="Geoghagen N.S.M."/>
            <person name="Gnehm C.L."/>
            <person name="McDonald L.A."/>
            <person name="Small K.V."/>
            <person name="Fraser C.M."/>
            <person name="Smith H.O."/>
            <person name="Venter J.C."/>
        </authorList>
    </citation>
    <scope>NUCLEOTIDE SEQUENCE [LARGE SCALE GENOMIC DNA]</scope>
    <source>
        <strain>ATCC 51907 / DSM 11121 / KW20 / Rd</strain>
    </source>
</reference>
<feature type="chain" id="PRO_0000078026" description="Uncharacterized protein HI_1327">
    <location>
        <begin position="1"/>
        <end position="45"/>
    </location>
</feature>
<feature type="transmembrane region" description="Helical" evidence="1">
    <location>
        <begin position="5"/>
        <end position="25"/>
    </location>
</feature>
<proteinExistence type="predicted"/>